<name>Y4217_MYCMM</name>
<organism>
    <name type="scientific">Mycobacterium marinum (strain ATCC BAA-535 / M)</name>
    <dbReference type="NCBI Taxonomy" id="216594"/>
    <lineage>
        <taxon>Bacteria</taxon>
        <taxon>Bacillati</taxon>
        <taxon>Actinomycetota</taxon>
        <taxon>Actinomycetes</taxon>
        <taxon>Mycobacteriales</taxon>
        <taxon>Mycobacteriaceae</taxon>
        <taxon>Mycobacterium</taxon>
        <taxon>Mycobacterium ulcerans group</taxon>
    </lineage>
</organism>
<protein>
    <recommendedName>
        <fullName>Putative O-methyltransferase MMAR_4217</fullName>
        <ecNumber>2.1.1.-</ecNumber>
    </recommendedName>
</protein>
<keyword id="KW-0489">Methyltransferase</keyword>
<keyword id="KW-1185">Reference proteome</keyword>
<keyword id="KW-0949">S-adenosyl-L-methionine</keyword>
<keyword id="KW-0808">Transferase</keyword>
<accession>B2HS47</accession>
<sequence length="224" mass="23032">MHGTDSSSDTPGQPAPSRAELLSAHAEGSISEDTILKTARDRAVDIGVGAVTPAVGALLSMLAKLSGGKAVAEVGTGAGVSGLWLLSGMSDDGVLTTIDIEPEHLRVAKQAFTEAGIGPSRTRLISGRAQEVLTRLADDSYDLVFVDADPIDQPDYVVEGVRLLRSGGVIVVHRAALGGRAGDPAARDAEVTAVREAARLIAEDERLTPALVPLGDGVLAAVRD</sequence>
<dbReference type="EC" id="2.1.1.-"/>
<dbReference type="EMBL" id="CP000854">
    <property type="protein sequence ID" value="ACC42625.1"/>
    <property type="molecule type" value="Genomic_DNA"/>
</dbReference>
<dbReference type="RefSeq" id="WP_012395789.1">
    <property type="nucleotide sequence ID" value="NC_010612.1"/>
</dbReference>
<dbReference type="SMR" id="B2HS47"/>
<dbReference type="STRING" id="216594.MMAR_4217"/>
<dbReference type="KEGG" id="mmi:MMAR_4217"/>
<dbReference type="eggNOG" id="COG4122">
    <property type="taxonomic scope" value="Bacteria"/>
</dbReference>
<dbReference type="HOGENOM" id="CLU_067676_2_0_11"/>
<dbReference type="OrthoDB" id="4774874at2"/>
<dbReference type="Proteomes" id="UP000001190">
    <property type="component" value="Chromosome"/>
</dbReference>
<dbReference type="GO" id="GO:0008171">
    <property type="term" value="F:O-methyltransferase activity"/>
    <property type="evidence" value="ECO:0007669"/>
    <property type="project" value="InterPro"/>
</dbReference>
<dbReference type="GO" id="GO:0008757">
    <property type="term" value="F:S-adenosylmethionine-dependent methyltransferase activity"/>
    <property type="evidence" value="ECO:0007669"/>
    <property type="project" value="TreeGrafter"/>
</dbReference>
<dbReference type="GO" id="GO:0032259">
    <property type="term" value="P:methylation"/>
    <property type="evidence" value="ECO:0007669"/>
    <property type="project" value="UniProtKB-KW"/>
</dbReference>
<dbReference type="CDD" id="cd02440">
    <property type="entry name" value="AdoMet_MTases"/>
    <property type="match status" value="1"/>
</dbReference>
<dbReference type="FunFam" id="3.40.50.150:FF:000374">
    <property type="entry name" value="Putative methyltransferase"/>
    <property type="match status" value="1"/>
</dbReference>
<dbReference type="Gene3D" id="3.40.50.150">
    <property type="entry name" value="Vaccinia Virus protein VP39"/>
    <property type="match status" value="1"/>
</dbReference>
<dbReference type="InterPro" id="IPR050362">
    <property type="entry name" value="Cation-dep_OMT"/>
</dbReference>
<dbReference type="InterPro" id="IPR029063">
    <property type="entry name" value="SAM-dependent_MTases_sf"/>
</dbReference>
<dbReference type="InterPro" id="IPR002935">
    <property type="entry name" value="SAM_O-MeTrfase"/>
</dbReference>
<dbReference type="PANTHER" id="PTHR10509:SF85">
    <property type="entry name" value="O-METHYLTRANSFERASE RV1220C-RELATED"/>
    <property type="match status" value="1"/>
</dbReference>
<dbReference type="PANTHER" id="PTHR10509">
    <property type="entry name" value="O-METHYLTRANSFERASE-RELATED"/>
    <property type="match status" value="1"/>
</dbReference>
<dbReference type="Pfam" id="PF01596">
    <property type="entry name" value="Methyltransf_3"/>
    <property type="match status" value="1"/>
</dbReference>
<dbReference type="SUPFAM" id="SSF53335">
    <property type="entry name" value="S-adenosyl-L-methionine-dependent methyltransferases"/>
    <property type="match status" value="1"/>
</dbReference>
<dbReference type="PROSITE" id="PS51682">
    <property type="entry name" value="SAM_OMT_I"/>
    <property type="match status" value="1"/>
</dbReference>
<proteinExistence type="inferred from homology"/>
<reference key="1">
    <citation type="journal article" date="2008" name="Genome Res.">
        <title>Insights from the complete genome sequence of Mycobacterium marinum on the evolution of Mycobacterium tuberculosis.</title>
        <authorList>
            <person name="Stinear T.P."/>
            <person name="Seemann T."/>
            <person name="Harrison P.F."/>
            <person name="Jenkin G.A."/>
            <person name="Davies J.K."/>
            <person name="Johnson P.D."/>
            <person name="Abdellah Z."/>
            <person name="Arrowsmith C."/>
            <person name="Chillingworth T."/>
            <person name="Churcher C."/>
            <person name="Clarke K."/>
            <person name="Cronin A."/>
            <person name="Davis P."/>
            <person name="Goodhead I."/>
            <person name="Holroyd N."/>
            <person name="Jagels K."/>
            <person name="Lord A."/>
            <person name="Moule S."/>
            <person name="Mungall K."/>
            <person name="Norbertczak H."/>
            <person name="Quail M.A."/>
            <person name="Rabbinowitsch E."/>
            <person name="Walker D."/>
            <person name="White B."/>
            <person name="Whitehead S."/>
            <person name="Small P.L."/>
            <person name="Brosch R."/>
            <person name="Ramakrishnan L."/>
            <person name="Fischbach M.A."/>
            <person name="Parkhill J."/>
            <person name="Cole S.T."/>
        </authorList>
    </citation>
    <scope>NUCLEOTIDE SEQUENCE [LARGE SCALE GENOMIC DNA]</scope>
    <source>
        <strain>ATCC BAA-535 / M</strain>
    </source>
</reference>
<gene>
    <name type="ordered locus">MMAR_4217</name>
</gene>
<feature type="chain" id="PRO_0000380098" description="Putative O-methyltransferase MMAR_4217">
    <location>
        <begin position="1"/>
        <end position="224"/>
    </location>
</feature>
<feature type="region of interest" description="Disordered" evidence="3">
    <location>
        <begin position="1"/>
        <end position="20"/>
    </location>
</feature>
<feature type="compositionally biased region" description="Polar residues" evidence="3">
    <location>
        <begin position="1"/>
        <end position="11"/>
    </location>
</feature>
<feature type="binding site" evidence="2">
    <location>
        <position position="51"/>
    </location>
    <ligand>
        <name>S-adenosyl-L-methionine</name>
        <dbReference type="ChEBI" id="CHEBI:59789"/>
    </ligand>
</feature>
<feature type="binding site" evidence="2">
    <location>
        <position position="73"/>
    </location>
    <ligand>
        <name>S-adenosyl-L-methionine</name>
        <dbReference type="ChEBI" id="CHEBI:59789"/>
    </ligand>
</feature>
<feature type="binding site" evidence="2">
    <location>
        <begin position="75"/>
        <end position="76"/>
    </location>
    <ligand>
        <name>S-adenosyl-L-methionine</name>
        <dbReference type="ChEBI" id="CHEBI:59789"/>
    </ligand>
</feature>
<feature type="binding site" evidence="2">
    <location>
        <position position="81"/>
    </location>
    <ligand>
        <name>S-adenosyl-L-methionine</name>
        <dbReference type="ChEBI" id="CHEBI:59789"/>
    </ligand>
</feature>
<feature type="binding site" evidence="2">
    <location>
        <position position="99"/>
    </location>
    <ligand>
        <name>S-adenosyl-L-methionine</name>
        <dbReference type="ChEBI" id="CHEBI:59789"/>
    </ligand>
</feature>
<feature type="binding site" evidence="2">
    <location>
        <position position="100"/>
    </location>
    <ligand>
        <name>S-adenosyl-L-methionine</name>
        <dbReference type="ChEBI" id="CHEBI:59789"/>
    </ligand>
</feature>
<feature type="binding site" evidence="1">
    <location>
        <position position="147"/>
    </location>
    <ligand>
        <name>substrate</name>
    </ligand>
</feature>
<feature type="binding site" evidence="2">
    <location>
        <position position="149"/>
    </location>
    <ligand>
        <name>S-adenosyl-L-methionine</name>
        <dbReference type="ChEBI" id="CHEBI:59789"/>
    </ligand>
</feature>
<comment type="similarity">
    <text evidence="2">Belongs to the class I-like SAM-binding methyltransferase superfamily. Cation-dependent O-methyltransferase family.</text>
</comment>
<evidence type="ECO:0000250" key="1"/>
<evidence type="ECO:0000255" key="2">
    <source>
        <dbReference type="PROSITE-ProRule" id="PRU01019"/>
    </source>
</evidence>
<evidence type="ECO:0000256" key="3">
    <source>
        <dbReference type="SAM" id="MobiDB-lite"/>
    </source>
</evidence>